<keyword id="KW-0067">ATP-binding</keyword>
<keyword id="KW-0378">Hydrolase</keyword>
<keyword id="KW-0460">Magnesium</keyword>
<keyword id="KW-0479">Metal-binding</keyword>
<keyword id="KW-0511">Multifunctional enzyme</keyword>
<keyword id="KW-0533">Nickel</keyword>
<keyword id="KW-0547">Nucleotide-binding</keyword>
<keyword id="KW-0548">Nucleotidyltransferase</keyword>
<keyword id="KW-1185">Reference proteome</keyword>
<keyword id="KW-0692">RNA repair</keyword>
<keyword id="KW-0694">RNA-binding</keyword>
<keyword id="KW-0808">Transferase</keyword>
<keyword id="KW-0819">tRNA processing</keyword>
<organism>
    <name type="scientific">Photorhabdus laumondii subsp. laumondii (strain DSM 15139 / CIP 105565 / TT01)</name>
    <name type="common">Photorhabdus luminescens subsp. laumondii</name>
    <dbReference type="NCBI Taxonomy" id="243265"/>
    <lineage>
        <taxon>Bacteria</taxon>
        <taxon>Pseudomonadati</taxon>
        <taxon>Pseudomonadota</taxon>
        <taxon>Gammaproteobacteria</taxon>
        <taxon>Enterobacterales</taxon>
        <taxon>Morganellaceae</taxon>
        <taxon>Photorhabdus</taxon>
    </lineage>
</organism>
<evidence type="ECO:0000255" key="1">
    <source>
        <dbReference type="HAMAP-Rule" id="MF_01261"/>
    </source>
</evidence>
<feature type="chain" id="PRO_0000138991" description="Multifunctional CCA protein">
    <location>
        <begin position="1"/>
        <end position="416"/>
    </location>
</feature>
<feature type="domain" description="HD" evidence="1">
    <location>
        <begin position="228"/>
        <end position="329"/>
    </location>
</feature>
<feature type="binding site" evidence="1">
    <location>
        <position position="8"/>
    </location>
    <ligand>
        <name>ATP</name>
        <dbReference type="ChEBI" id="CHEBI:30616"/>
    </ligand>
</feature>
<feature type="binding site" evidence="1">
    <location>
        <position position="8"/>
    </location>
    <ligand>
        <name>CTP</name>
        <dbReference type="ChEBI" id="CHEBI:37563"/>
    </ligand>
</feature>
<feature type="binding site" evidence="1">
    <location>
        <position position="11"/>
    </location>
    <ligand>
        <name>ATP</name>
        <dbReference type="ChEBI" id="CHEBI:30616"/>
    </ligand>
</feature>
<feature type="binding site" evidence="1">
    <location>
        <position position="11"/>
    </location>
    <ligand>
        <name>CTP</name>
        <dbReference type="ChEBI" id="CHEBI:37563"/>
    </ligand>
</feature>
<feature type="binding site" evidence="1">
    <location>
        <position position="21"/>
    </location>
    <ligand>
        <name>Mg(2+)</name>
        <dbReference type="ChEBI" id="CHEBI:18420"/>
    </ligand>
</feature>
<feature type="binding site" evidence="1">
    <location>
        <position position="23"/>
    </location>
    <ligand>
        <name>Mg(2+)</name>
        <dbReference type="ChEBI" id="CHEBI:18420"/>
    </ligand>
</feature>
<feature type="binding site" evidence="1">
    <location>
        <position position="91"/>
    </location>
    <ligand>
        <name>ATP</name>
        <dbReference type="ChEBI" id="CHEBI:30616"/>
    </ligand>
</feature>
<feature type="binding site" evidence="1">
    <location>
        <position position="91"/>
    </location>
    <ligand>
        <name>CTP</name>
        <dbReference type="ChEBI" id="CHEBI:37563"/>
    </ligand>
</feature>
<feature type="binding site" evidence="1">
    <location>
        <position position="137"/>
    </location>
    <ligand>
        <name>ATP</name>
        <dbReference type="ChEBI" id="CHEBI:30616"/>
    </ligand>
</feature>
<feature type="binding site" evidence="1">
    <location>
        <position position="137"/>
    </location>
    <ligand>
        <name>CTP</name>
        <dbReference type="ChEBI" id="CHEBI:37563"/>
    </ligand>
</feature>
<feature type="binding site" evidence="1">
    <location>
        <position position="140"/>
    </location>
    <ligand>
        <name>ATP</name>
        <dbReference type="ChEBI" id="CHEBI:30616"/>
    </ligand>
</feature>
<feature type="binding site" evidence="1">
    <location>
        <position position="140"/>
    </location>
    <ligand>
        <name>CTP</name>
        <dbReference type="ChEBI" id="CHEBI:37563"/>
    </ligand>
</feature>
<protein>
    <recommendedName>
        <fullName evidence="1">Multifunctional CCA protein</fullName>
    </recommendedName>
    <domain>
        <recommendedName>
            <fullName evidence="1">CCA-adding enzyme</fullName>
            <ecNumber evidence="1">2.7.7.72</ecNumber>
        </recommendedName>
        <alternativeName>
            <fullName evidence="1">CCA tRNA nucleotidyltransferase</fullName>
        </alternativeName>
        <alternativeName>
            <fullName evidence="1">tRNA CCA-pyrophosphorylase</fullName>
        </alternativeName>
        <alternativeName>
            <fullName evidence="1">tRNA adenylyl-/cytidylyl-transferase</fullName>
        </alternativeName>
        <alternativeName>
            <fullName evidence="1">tRNA nucleotidyltransferase</fullName>
        </alternativeName>
        <alternativeName>
            <fullName evidence="1">tRNA-NT</fullName>
        </alternativeName>
    </domain>
    <domain>
        <recommendedName>
            <fullName evidence="1">2'-nucleotidase</fullName>
            <ecNumber evidence="1">3.1.3.-</ecNumber>
        </recommendedName>
    </domain>
    <domain>
        <recommendedName>
            <fullName evidence="1">2',3'-cyclic phosphodiesterase</fullName>
            <ecNumber evidence="1">3.1.4.-</ecNumber>
        </recommendedName>
    </domain>
    <domain>
        <recommendedName>
            <fullName evidence="1">Phosphatase</fullName>
            <ecNumber evidence="1">3.1.3.-</ecNumber>
        </recommendedName>
    </domain>
</protein>
<reference key="1">
    <citation type="journal article" date="2003" name="Nat. Biotechnol.">
        <title>The genome sequence of the entomopathogenic bacterium Photorhabdus luminescens.</title>
        <authorList>
            <person name="Duchaud E."/>
            <person name="Rusniok C."/>
            <person name="Frangeul L."/>
            <person name="Buchrieser C."/>
            <person name="Givaudan A."/>
            <person name="Taourit S."/>
            <person name="Bocs S."/>
            <person name="Boursaux-Eude C."/>
            <person name="Chandler M."/>
            <person name="Charles J.-F."/>
            <person name="Dassa E."/>
            <person name="Derose R."/>
            <person name="Derzelle S."/>
            <person name="Freyssinet G."/>
            <person name="Gaudriault S."/>
            <person name="Medigue C."/>
            <person name="Lanois A."/>
            <person name="Powell K."/>
            <person name="Siguier P."/>
            <person name="Vincent R."/>
            <person name="Wingate V."/>
            <person name="Zouine M."/>
            <person name="Glaser P."/>
            <person name="Boemare N."/>
            <person name="Danchin A."/>
            <person name="Kunst F."/>
        </authorList>
    </citation>
    <scope>NUCLEOTIDE SEQUENCE [LARGE SCALE GENOMIC DNA]</scope>
    <source>
        <strain>DSM 15139 / CIP 105565 / TT01</strain>
    </source>
</reference>
<accession>Q7MAZ9</accession>
<name>CCA_PHOLL</name>
<comment type="function">
    <text evidence="1">Catalyzes the addition and repair of the essential 3'-terminal CCA sequence in tRNAs without using a nucleic acid template. Adds these three nucleotides in the order of C, C, and A to the tRNA nucleotide-73, using CTP and ATP as substrates and producing inorganic pyrophosphate. tRNA 3'-terminal CCA addition is required both for tRNA processing and repair. Also involved in tRNA surveillance by mediating tandem CCA addition to generate a CCACCA at the 3' terminus of unstable tRNAs. While stable tRNAs receive only 3'-terminal CCA, unstable tRNAs are marked with CCACCA and rapidly degraded.</text>
</comment>
<comment type="catalytic activity">
    <reaction evidence="1">
        <text>a tRNA precursor + 2 CTP + ATP = a tRNA with a 3' CCA end + 3 diphosphate</text>
        <dbReference type="Rhea" id="RHEA:14433"/>
        <dbReference type="Rhea" id="RHEA-COMP:10465"/>
        <dbReference type="Rhea" id="RHEA-COMP:10468"/>
        <dbReference type="ChEBI" id="CHEBI:30616"/>
        <dbReference type="ChEBI" id="CHEBI:33019"/>
        <dbReference type="ChEBI" id="CHEBI:37563"/>
        <dbReference type="ChEBI" id="CHEBI:74896"/>
        <dbReference type="ChEBI" id="CHEBI:83071"/>
        <dbReference type="EC" id="2.7.7.72"/>
    </reaction>
</comment>
<comment type="catalytic activity">
    <reaction evidence="1">
        <text>a tRNA with a 3' CCA end + 2 CTP + ATP = a tRNA with a 3' CCACCA end + 3 diphosphate</text>
        <dbReference type="Rhea" id="RHEA:76235"/>
        <dbReference type="Rhea" id="RHEA-COMP:10468"/>
        <dbReference type="Rhea" id="RHEA-COMP:18655"/>
        <dbReference type="ChEBI" id="CHEBI:30616"/>
        <dbReference type="ChEBI" id="CHEBI:33019"/>
        <dbReference type="ChEBI" id="CHEBI:37563"/>
        <dbReference type="ChEBI" id="CHEBI:83071"/>
        <dbReference type="ChEBI" id="CHEBI:195187"/>
    </reaction>
    <physiologicalReaction direction="left-to-right" evidence="1">
        <dbReference type="Rhea" id="RHEA:76236"/>
    </physiologicalReaction>
</comment>
<comment type="cofactor">
    <cofactor evidence="1">
        <name>Mg(2+)</name>
        <dbReference type="ChEBI" id="CHEBI:18420"/>
    </cofactor>
    <text evidence="1">Magnesium is required for nucleotidyltransferase activity.</text>
</comment>
<comment type="cofactor">
    <cofactor evidence="1">
        <name>Ni(2+)</name>
        <dbReference type="ChEBI" id="CHEBI:49786"/>
    </cofactor>
    <text evidence="1">Nickel for phosphatase activity.</text>
</comment>
<comment type="subunit">
    <text evidence="1">Monomer. Can also form homodimers and oligomers.</text>
</comment>
<comment type="domain">
    <text evidence="1">Comprises two domains: an N-terminal domain containing the nucleotidyltransferase activity and a C-terminal HD domain associated with both phosphodiesterase and phosphatase activities.</text>
</comment>
<comment type="miscellaneous">
    <text evidence="1">A single active site specifically recognizes both ATP and CTP and is responsible for their addition.</text>
</comment>
<comment type="similarity">
    <text evidence="1">Belongs to the tRNA nucleotidyltransferase/poly(A) polymerase family. Bacterial CCA-adding enzyme type 1 subfamily.</text>
</comment>
<sequence>MRVYLVGGAVRDRLLNFPVKERDWVVVGGTSEALLSLGYQQVGKDFPVFLHPQTHEEYALARTERKSGLGYTGFTCYAAPDVTLEDDLQRRDLTVNAIAQTPTGELVDPYHGVDDLNNRILRHVSDAFSEDPLRVLRVARFAARFAHLGFTIASETQALMSNMAINGELSVLTPERVWKETEKALASPSPQVFFQVLRDCGALAVLFPEIDNLFGVPAPEKWHPEIDTGIHTLMVLKVATELTDEVDSRFAALCHDLGKGLTPPEQWPHHYGHGPAGVKLVDQLCQRLRVPNSARDLAKLAAQYHDLVHTVTQLRPKTLLKLFDAVDAWRKPQRIEQLIIISEADARGRTGFENTPYPQGDCLRQAFKVASQVQVKNIVDSGLRGADIGHELRRQRQHALAQWKQQDDTAQDNTVT</sequence>
<dbReference type="EC" id="2.7.7.72" evidence="1"/>
<dbReference type="EC" id="3.1.3.-" evidence="1"/>
<dbReference type="EC" id="3.1.4.-" evidence="1"/>
<dbReference type="EMBL" id="BX571872">
    <property type="protein sequence ID" value="CAE16344.1"/>
    <property type="molecule type" value="Genomic_DNA"/>
</dbReference>
<dbReference type="RefSeq" id="WP_011148105.1">
    <property type="nucleotide sequence ID" value="NC_005126.1"/>
</dbReference>
<dbReference type="SMR" id="Q7MAZ9"/>
<dbReference type="STRING" id="243265.plu3972"/>
<dbReference type="GeneID" id="48850198"/>
<dbReference type="KEGG" id="plu:plu3972"/>
<dbReference type="eggNOG" id="COG0617">
    <property type="taxonomic scope" value="Bacteria"/>
</dbReference>
<dbReference type="HOGENOM" id="CLU_015961_1_1_6"/>
<dbReference type="OrthoDB" id="9805698at2"/>
<dbReference type="Proteomes" id="UP000002514">
    <property type="component" value="Chromosome"/>
</dbReference>
<dbReference type="GO" id="GO:0005524">
    <property type="term" value="F:ATP binding"/>
    <property type="evidence" value="ECO:0007669"/>
    <property type="project" value="UniProtKB-UniRule"/>
</dbReference>
<dbReference type="GO" id="GO:0004810">
    <property type="term" value="F:CCA tRNA nucleotidyltransferase activity"/>
    <property type="evidence" value="ECO:0007669"/>
    <property type="project" value="UniProtKB-UniRule"/>
</dbReference>
<dbReference type="GO" id="GO:0004112">
    <property type="term" value="F:cyclic-nucleotide phosphodiesterase activity"/>
    <property type="evidence" value="ECO:0007669"/>
    <property type="project" value="UniProtKB-UniRule"/>
</dbReference>
<dbReference type="GO" id="GO:0000287">
    <property type="term" value="F:magnesium ion binding"/>
    <property type="evidence" value="ECO:0007669"/>
    <property type="project" value="UniProtKB-UniRule"/>
</dbReference>
<dbReference type="GO" id="GO:0016791">
    <property type="term" value="F:phosphatase activity"/>
    <property type="evidence" value="ECO:0007669"/>
    <property type="project" value="UniProtKB-UniRule"/>
</dbReference>
<dbReference type="GO" id="GO:0000049">
    <property type="term" value="F:tRNA binding"/>
    <property type="evidence" value="ECO:0007669"/>
    <property type="project" value="UniProtKB-UniRule"/>
</dbReference>
<dbReference type="GO" id="GO:0042245">
    <property type="term" value="P:RNA repair"/>
    <property type="evidence" value="ECO:0007669"/>
    <property type="project" value="UniProtKB-KW"/>
</dbReference>
<dbReference type="GO" id="GO:0001680">
    <property type="term" value="P:tRNA 3'-terminal CCA addition"/>
    <property type="evidence" value="ECO:0007669"/>
    <property type="project" value="UniProtKB-UniRule"/>
</dbReference>
<dbReference type="CDD" id="cd00077">
    <property type="entry name" value="HDc"/>
    <property type="match status" value="1"/>
</dbReference>
<dbReference type="FunFam" id="1.10.3090.10:FF:000001">
    <property type="entry name" value="Multifunctional CCA protein"/>
    <property type="match status" value="1"/>
</dbReference>
<dbReference type="FunFam" id="3.30.460.10:FF:000016">
    <property type="entry name" value="Multifunctional CCA protein"/>
    <property type="match status" value="1"/>
</dbReference>
<dbReference type="Gene3D" id="3.30.460.10">
    <property type="entry name" value="Beta Polymerase, domain 2"/>
    <property type="match status" value="1"/>
</dbReference>
<dbReference type="Gene3D" id="1.10.3090.10">
    <property type="entry name" value="cca-adding enzyme, domain 2"/>
    <property type="match status" value="1"/>
</dbReference>
<dbReference type="HAMAP" id="MF_01261">
    <property type="entry name" value="CCA_bact_type1"/>
    <property type="match status" value="1"/>
</dbReference>
<dbReference type="HAMAP" id="MF_01262">
    <property type="entry name" value="CCA_bact_type2"/>
    <property type="match status" value="1"/>
</dbReference>
<dbReference type="InterPro" id="IPR012006">
    <property type="entry name" value="CCA_bact"/>
</dbReference>
<dbReference type="InterPro" id="IPR003607">
    <property type="entry name" value="HD/PDEase_dom"/>
</dbReference>
<dbReference type="InterPro" id="IPR006674">
    <property type="entry name" value="HD_domain"/>
</dbReference>
<dbReference type="InterPro" id="IPR043519">
    <property type="entry name" value="NT_sf"/>
</dbReference>
<dbReference type="InterPro" id="IPR002646">
    <property type="entry name" value="PolA_pol_head_dom"/>
</dbReference>
<dbReference type="InterPro" id="IPR032828">
    <property type="entry name" value="PolyA_RNA-bd"/>
</dbReference>
<dbReference type="InterPro" id="IPR050124">
    <property type="entry name" value="tRNA_CCA-adding_enzyme"/>
</dbReference>
<dbReference type="NCBIfam" id="NF008137">
    <property type="entry name" value="PRK10885.1"/>
    <property type="match status" value="1"/>
</dbReference>
<dbReference type="PANTHER" id="PTHR47545">
    <property type="entry name" value="MULTIFUNCTIONAL CCA PROTEIN"/>
    <property type="match status" value="1"/>
</dbReference>
<dbReference type="PANTHER" id="PTHR47545:SF1">
    <property type="entry name" value="MULTIFUNCTIONAL CCA PROTEIN"/>
    <property type="match status" value="1"/>
</dbReference>
<dbReference type="Pfam" id="PF01966">
    <property type="entry name" value="HD"/>
    <property type="match status" value="1"/>
</dbReference>
<dbReference type="Pfam" id="PF01743">
    <property type="entry name" value="PolyA_pol"/>
    <property type="match status" value="1"/>
</dbReference>
<dbReference type="Pfam" id="PF12627">
    <property type="entry name" value="PolyA_pol_RNAbd"/>
    <property type="match status" value="1"/>
</dbReference>
<dbReference type="PIRSF" id="PIRSF000813">
    <property type="entry name" value="CCA_bact"/>
    <property type="match status" value="1"/>
</dbReference>
<dbReference type="SMART" id="SM00471">
    <property type="entry name" value="HDc"/>
    <property type="match status" value="1"/>
</dbReference>
<dbReference type="SUPFAM" id="SSF81301">
    <property type="entry name" value="Nucleotidyltransferase"/>
    <property type="match status" value="1"/>
</dbReference>
<dbReference type="SUPFAM" id="SSF81891">
    <property type="entry name" value="Poly A polymerase C-terminal region-like"/>
    <property type="match status" value="1"/>
</dbReference>
<dbReference type="PROSITE" id="PS51831">
    <property type="entry name" value="HD"/>
    <property type="match status" value="1"/>
</dbReference>
<gene>
    <name evidence="1" type="primary">cca</name>
    <name type="ordered locus">plu3972</name>
</gene>
<proteinExistence type="inferred from homology"/>